<protein>
    <recommendedName>
        <fullName evidence="1">Probable manganese efflux pump MntP</fullName>
    </recommendedName>
</protein>
<accession>Q7UCL3</accession>
<accession>Q83L80</accession>
<name>MNTP_SHIFL</name>
<dbReference type="EMBL" id="AE005674">
    <property type="protein sequence ID" value="AAN43006.1"/>
    <property type="status" value="ALT_FRAME"/>
    <property type="molecule type" value="Genomic_DNA"/>
</dbReference>
<dbReference type="EMBL" id="AE014073">
    <property type="protein sequence ID" value="AAP16901.1"/>
    <property type="status" value="ALT_INIT"/>
    <property type="molecule type" value="Genomic_DNA"/>
</dbReference>
<dbReference type="RefSeq" id="WP_001668667.1">
    <property type="nucleotide sequence ID" value="NZ_WPGW01000080.1"/>
</dbReference>
<dbReference type="PaxDb" id="198214-SF1405"/>
<dbReference type="KEGG" id="sfx:S1520"/>
<dbReference type="PATRIC" id="fig|623.156.peg.528"/>
<dbReference type="HOGENOM" id="CLU_096410_0_0_6"/>
<dbReference type="Proteomes" id="UP000001006">
    <property type="component" value="Chromosome"/>
</dbReference>
<dbReference type="Proteomes" id="UP000002673">
    <property type="component" value="Chromosome"/>
</dbReference>
<dbReference type="GO" id="GO:0005886">
    <property type="term" value="C:plasma membrane"/>
    <property type="evidence" value="ECO:0007669"/>
    <property type="project" value="UniProtKB-SubCell"/>
</dbReference>
<dbReference type="GO" id="GO:0005384">
    <property type="term" value="F:manganese ion transmembrane transporter activity"/>
    <property type="evidence" value="ECO:0007669"/>
    <property type="project" value="UniProtKB-UniRule"/>
</dbReference>
<dbReference type="HAMAP" id="MF_01521">
    <property type="entry name" value="MntP_pump"/>
    <property type="match status" value="1"/>
</dbReference>
<dbReference type="InterPro" id="IPR003810">
    <property type="entry name" value="Mntp/YtaF"/>
</dbReference>
<dbReference type="InterPro" id="IPR022929">
    <property type="entry name" value="Put_MntP"/>
</dbReference>
<dbReference type="NCBIfam" id="NF008546">
    <property type="entry name" value="PRK11469.1"/>
    <property type="match status" value="1"/>
</dbReference>
<dbReference type="PANTHER" id="PTHR35529">
    <property type="entry name" value="MANGANESE EFFLUX PUMP MNTP-RELATED"/>
    <property type="match status" value="1"/>
</dbReference>
<dbReference type="PANTHER" id="PTHR35529:SF1">
    <property type="entry name" value="MANGANESE EFFLUX PUMP MNTP-RELATED"/>
    <property type="match status" value="1"/>
</dbReference>
<dbReference type="Pfam" id="PF02659">
    <property type="entry name" value="Mntp"/>
    <property type="match status" value="1"/>
</dbReference>
<feature type="chain" id="PRO_0000155667" description="Probable manganese efflux pump MntP">
    <location>
        <begin position="1"/>
        <end position="188"/>
    </location>
</feature>
<feature type="transmembrane region" description="Helical" evidence="1">
    <location>
        <begin position="3"/>
        <end position="23"/>
    </location>
</feature>
<feature type="transmembrane region" description="Helical" evidence="1">
    <location>
        <begin position="66"/>
        <end position="86"/>
    </location>
</feature>
<feature type="transmembrane region" description="Helical" evidence="1">
    <location>
        <begin position="106"/>
        <end position="128"/>
    </location>
</feature>
<feature type="transmembrane region" description="Helical" evidence="1">
    <location>
        <begin position="143"/>
        <end position="163"/>
    </location>
</feature>
<feature type="transmembrane region" description="Helical" evidence="1">
    <location>
        <begin position="168"/>
        <end position="188"/>
    </location>
</feature>
<gene>
    <name evidence="1" type="primary">mntP</name>
    <name type="synonym">yebN</name>
    <name type="ordered locus">SF1405</name>
    <name type="ordered locus">S1520</name>
</gene>
<evidence type="ECO:0000255" key="1">
    <source>
        <dbReference type="HAMAP-Rule" id="MF_01521"/>
    </source>
</evidence>
<evidence type="ECO:0000305" key="2"/>
<sequence length="188" mass="20113">MNITATVLLAFGMSMDAFAASIGKGAPLHKPKFSEALRTGLIFGAVETLTPLIGWGMGMLASRFVLEWNHWIAFVLLIFLGGRMIIEGFRGADDEDEEPRRRHGFWLLVTTAIATSLDAMAVGVGLAFLQVNIIATALAIGCATLIMSTLGMMVGRFIGSIIGKKAEILGGLVLIGIGVQILWTHFHG</sequence>
<organism>
    <name type="scientific">Shigella flexneri</name>
    <dbReference type="NCBI Taxonomy" id="623"/>
    <lineage>
        <taxon>Bacteria</taxon>
        <taxon>Pseudomonadati</taxon>
        <taxon>Pseudomonadota</taxon>
        <taxon>Gammaproteobacteria</taxon>
        <taxon>Enterobacterales</taxon>
        <taxon>Enterobacteriaceae</taxon>
        <taxon>Shigella</taxon>
    </lineage>
</organism>
<proteinExistence type="inferred from homology"/>
<reference key="1">
    <citation type="journal article" date="2002" name="Nucleic Acids Res.">
        <title>Genome sequence of Shigella flexneri 2a: insights into pathogenicity through comparison with genomes of Escherichia coli K12 and O157.</title>
        <authorList>
            <person name="Jin Q."/>
            <person name="Yuan Z."/>
            <person name="Xu J."/>
            <person name="Wang Y."/>
            <person name="Shen Y."/>
            <person name="Lu W."/>
            <person name="Wang J."/>
            <person name="Liu H."/>
            <person name="Yang J."/>
            <person name="Yang F."/>
            <person name="Zhang X."/>
            <person name="Zhang J."/>
            <person name="Yang G."/>
            <person name="Wu H."/>
            <person name="Qu D."/>
            <person name="Dong J."/>
            <person name="Sun L."/>
            <person name="Xue Y."/>
            <person name="Zhao A."/>
            <person name="Gao Y."/>
            <person name="Zhu J."/>
            <person name="Kan B."/>
            <person name="Ding K."/>
            <person name="Chen S."/>
            <person name="Cheng H."/>
            <person name="Yao Z."/>
            <person name="He B."/>
            <person name="Chen R."/>
            <person name="Ma D."/>
            <person name="Qiang B."/>
            <person name="Wen Y."/>
            <person name="Hou Y."/>
            <person name="Yu J."/>
        </authorList>
    </citation>
    <scope>NUCLEOTIDE SEQUENCE [LARGE SCALE GENOMIC DNA]</scope>
    <source>
        <strain>301 / Serotype 2a</strain>
    </source>
</reference>
<reference key="2">
    <citation type="journal article" date="2003" name="Infect. Immun.">
        <title>Complete genome sequence and comparative genomics of Shigella flexneri serotype 2a strain 2457T.</title>
        <authorList>
            <person name="Wei J."/>
            <person name="Goldberg M.B."/>
            <person name="Burland V."/>
            <person name="Venkatesan M.M."/>
            <person name="Deng W."/>
            <person name="Fournier G."/>
            <person name="Mayhew G.F."/>
            <person name="Plunkett G. III"/>
            <person name="Rose D.J."/>
            <person name="Darling A."/>
            <person name="Mau B."/>
            <person name="Perna N.T."/>
            <person name="Payne S.M."/>
            <person name="Runyen-Janecky L.J."/>
            <person name="Zhou S."/>
            <person name="Schwartz D.C."/>
            <person name="Blattner F.R."/>
        </authorList>
    </citation>
    <scope>NUCLEOTIDE SEQUENCE [LARGE SCALE GENOMIC DNA]</scope>
    <source>
        <strain>ATCC 700930 / 2457T / Serotype 2a</strain>
    </source>
</reference>
<keyword id="KW-0997">Cell inner membrane</keyword>
<keyword id="KW-1003">Cell membrane</keyword>
<keyword id="KW-0406">Ion transport</keyword>
<keyword id="KW-0464">Manganese</keyword>
<keyword id="KW-0472">Membrane</keyword>
<keyword id="KW-1185">Reference proteome</keyword>
<keyword id="KW-0812">Transmembrane</keyword>
<keyword id="KW-1133">Transmembrane helix</keyword>
<keyword id="KW-0813">Transport</keyword>
<comment type="function">
    <text evidence="1">Probably functions as a manganese efflux pump.</text>
</comment>
<comment type="subcellular location">
    <subcellularLocation>
        <location evidence="1">Cell inner membrane</location>
        <topology evidence="1">Multi-pass membrane protein</topology>
    </subcellularLocation>
</comment>
<comment type="similarity">
    <text evidence="1">Belongs to the MntP (TC 9.B.29) family.</text>
</comment>
<comment type="sequence caution" evidence="2">
    <conflict type="frameshift">
        <sequence resource="EMBL-CDS" id="AAN43006"/>
    </conflict>
</comment>
<comment type="sequence caution" evidence="2">
    <conflict type="erroneous initiation">
        <sequence resource="EMBL-CDS" id="AAP16901"/>
    </conflict>
</comment>